<organism>
    <name type="scientific">Staphylococcus carnosus (strain TM300)</name>
    <dbReference type="NCBI Taxonomy" id="396513"/>
    <lineage>
        <taxon>Bacteria</taxon>
        <taxon>Bacillati</taxon>
        <taxon>Bacillota</taxon>
        <taxon>Bacilli</taxon>
        <taxon>Bacillales</taxon>
        <taxon>Staphylococcaceae</taxon>
        <taxon>Staphylococcus</taxon>
    </lineage>
</organism>
<comment type="catalytic activity">
    <reaction evidence="1">
        <text>(6S)-5,6,7,8-tetrahydrofolate + formate + ATP = (6R)-10-formyltetrahydrofolate + ADP + phosphate</text>
        <dbReference type="Rhea" id="RHEA:20221"/>
        <dbReference type="ChEBI" id="CHEBI:15740"/>
        <dbReference type="ChEBI" id="CHEBI:30616"/>
        <dbReference type="ChEBI" id="CHEBI:43474"/>
        <dbReference type="ChEBI" id="CHEBI:57453"/>
        <dbReference type="ChEBI" id="CHEBI:195366"/>
        <dbReference type="ChEBI" id="CHEBI:456216"/>
        <dbReference type="EC" id="6.3.4.3"/>
    </reaction>
</comment>
<comment type="pathway">
    <text evidence="1">One-carbon metabolism; tetrahydrofolate interconversion.</text>
</comment>
<comment type="similarity">
    <text evidence="1">Belongs to the formate--tetrahydrofolate ligase family.</text>
</comment>
<feature type="chain" id="PRO_1000185263" description="Formate--tetrahydrofolate ligase">
    <location>
        <begin position="1"/>
        <end position="555"/>
    </location>
</feature>
<feature type="binding site" evidence="1">
    <location>
        <begin position="65"/>
        <end position="72"/>
    </location>
    <ligand>
        <name>ATP</name>
        <dbReference type="ChEBI" id="CHEBI:30616"/>
    </ligand>
</feature>
<name>FTHS_STACT</name>
<sequence>MTHLSDLDIANQATIKPISEIAEKIGIPEDALEQYGHYKAKIDINKLDDKGDRGKVVLVTAMSPTPAGEGKSTVTVGLADAFHELGENVMMALREPALGPVFGIKGGATGGGYAQVLPMEDINLHFNGDFHAITTANNALAAFIDNHIHQGNELGIDQRRIEWKRVLDMNDRELRKVVVGLGGPTQGVPREDGFNITVASEIMTILCLSTGLKDLKASIANITIGYTRDRKPVTVADLKVEGALAMILKDAIKPNLVQSIEGTPALIHGGPFANIAHGCNSIIATETARKLADIVVTEAGFGSDLGAEKFMNIKARKAGFEPSAAVVVATIRALKMHGGVAKDDLKEENVQAVRDGLANLERHIENIRSFGVEPVVALNAFVSDTEAEEQVVEDWAKEHGVRIALTEVWEKGGKGGVELAKQVQEVLNEKHDFKHTYDLDLPIEEKIEKVVTNIYGGNKVTFTSGALKQLKQIKENGWDNYPVCMAKTQYSFTDDKDRLGAPDDFEITIRELQPKTGAGFIVALTGAIMTMPGLPKKPAALNMDVTEDGHAKGLF</sequence>
<protein>
    <recommendedName>
        <fullName evidence="1">Formate--tetrahydrofolate ligase</fullName>
        <ecNumber evidence="1">6.3.4.3</ecNumber>
    </recommendedName>
    <alternativeName>
        <fullName evidence="1">Formyltetrahydrofolate synthetase</fullName>
        <shortName evidence="1">FHS</shortName>
        <shortName evidence="1">FTHFS</shortName>
    </alternativeName>
</protein>
<keyword id="KW-0067">ATP-binding</keyword>
<keyword id="KW-0436">Ligase</keyword>
<keyword id="KW-0547">Nucleotide-binding</keyword>
<keyword id="KW-0554">One-carbon metabolism</keyword>
<keyword id="KW-1185">Reference proteome</keyword>
<evidence type="ECO:0000255" key="1">
    <source>
        <dbReference type="HAMAP-Rule" id="MF_01543"/>
    </source>
</evidence>
<dbReference type="EC" id="6.3.4.3" evidence="1"/>
<dbReference type="EMBL" id="AM295250">
    <property type="protein sequence ID" value="CAL28242.1"/>
    <property type="molecule type" value="Genomic_DNA"/>
</dbReference>
<dbReference type="RefSeq" id="WP_015900582.1">
    <property type="nucleotide sequence ID" value="NC_012121.1"/>
</dbReference>
<dbReference type="SMR" id="B9DN77"/>
<dbReference type="KEGG" id="sca:SCA_1337"/>
<dbReference type="eggNOG" id="COG2759">
    <property type="taxonomic scope" value="Bacteria"/>
</dbReference>
<dbReference type="HOGENOM" id="CLU_003601_3_3_9"/>
<dbReference type="OrthoDB" id="9761733at2"/>
<dbReference type="BioCyc" id="SCAR396513:SCA_RS06650-MONOMER"/>
<dbReference type="UniPathway" id="UPA00193"/>
<dbReference type="Proteomes" id="UP000000444">
    <property type="component" value="Chromosome"/>
</dbReference>
<dbReference type="GO" id="GO:0005524">
    <property type="term" value="F:ATP binding"/>
    <property type="evidence" value="ECO:0007669"/>
    <property type="project" value="UniProtKB-UniRule"/>
</dbReference>
<dbReference type="GO" id="GO:0004329">
    <property type="term" value="F:formate-tetrahydrofolate ligase activity"/>
    <property type="evidence" value="ECO:0007669"/>
    <property type="project" value="UniProtKB-UniRule"/>
</dbReference>
<dbReference type="GO" id="GO:0035999">
    <property type="term" value="P:tetrahydrofolate interconversion"/>
    <property type="evidence" value="ECO:0007669"/>
    <property type="project" value="UniProtKB-UniRule"/>
</dbReference>
<dbReference type="CDD" id="cd00477">
    <property type="entry name" value="FTHFS"/>
    <property type="match status" value="1"/>
</dbReference>
<dbReference type="FunFam" id="3.30.1510.10:FF:000001">
    <property type="entry name" value="Formate--tetrahydrofolate ligase"/>
    <property type="match status" value="1"/>
</dbReference>
<dbReference type="FunFam" id="3.10.410.10:FF:000001">
    <property type="entry name" value="Putative formate--tetrahydrofolate ligase"/>
    <property type="match status" value="1"/>
</dbReference>
<dbReference type="Gene3D" id="3.30.1510.10">
    <property type="entry name" value="Domain 2, N(10)-formyltetrahydrofolate synthetase"/>
    <property type="match status" value="1"/>
</dbReference>
<dbReference type="Gene3D" id="3.10.410.10">
    <property type="entry name" value="Formyltetrahydrofolate synthetase, domain 3"/>
    <property type="match status" value="1"/>
</dbReference>
<dbReference type="Gene3D" id="3.40.50.300">
    <property type="entry name" value="P-loop containing nucleotide triphosphate hydrolases"/>
    <property type="match status" value="1"/>
</dbReference>
<dbReference type="HAMAP" id="MF_01543">
    <property type="entry name" value="FTHFS"/>
    <property type="match status" value="1"/>
</dbReference>
<dbReference type="InterPro" id="IPR000559">
    <property type="entry name" value="Formate_THF_ligase"/>
</dbReference>
<dbReference type="InterPro" id="IPR020628">
    <property type="entry name" value="Formate_THF_ligase_CS"/>
</dbReference>
<dbReference type="InterPro" id="IPR027417">
    <property type="entry name" value="P-loop_NTPase"/>
</dbReference>
<dbReference type="NCBIfam" id="NF010030">
    <property type="entry name" value="PRK13505.1"/>
    <property type="match status" value="1"/>
</dbReference>
<dbReference type="Pfam" id="PF01268">
    <property type="entry name" value="FTHFS"/>
    <property type="match status" value="1"/>
</dbReference>
<dbReference type="SUPFAM" id="SSF52540">
    <property type="entry name" value="P-loop containing nucleoside triphosphate hydrolases"/>
    <property type="match status" value="1"/>
</dbReference>
<dbReference type="PROSITE" id="PS00721">
    <property type="entry name" value="FTHFS_1"/>
    <property type="match status" value="1"/>
</dbReference>
<dbReference type="PROSITE" id="PS00722">
    <property type="entry name" value="FTHFS_2"/>
    <property type="match status" value="1"/>
</dbReference>
<gene>
    <name evidence="1" type="primary">fhs</name>
    <name type="ordered locus">Sca_1337</name>
</gene>
<reference key="1">
    <citation type="journal article" date="2009" name="Appl. Environ. Microbiol.">
        <title>Genome analysis of the meat starter culture bacterium Staphylococcus carnosus TM300.</title>
        <authorList>
            <person name="Rosenstein R."/>
            <person name="Nerz C."/>
            <person name="Biswas L."/>
            <person name="Resch A."/>
            <person name="Raddatz G."/>
            <person name="Schuster S.C."/>
            <person name="Goetz F."/>
        </authorList>
    </citation>
    <scope>NUCLEOTIDE SEQUENCE [LARGE SCALE GENOMIC DNA]</scope>
    <source>
        <strain>TM300</strain>
    </source>
</reference>
<proteinExistence type="inferred from homology"/>
<accession>B9DN77</accession>